<evidence type="ECO:0000255" key="1">
    <source>
        <dbReference type="HAMAP-Rule" id="MF_01441"/>
    </source>
</evidence>
<feature type="chain" id="PRO_1000184934" description="DNA protection during starvation protein">
    <location>
        <begin position="1"/>
        <end position="167"/>
    </location>
</feature>
<feature type="binding site" evidence="1">
    <location>
        <position position="51"/>
    </location>
    <ligand>
        <name>Fe cation</name>
        <dbReference type="ChEBI" id="CHEBI:24875"/>
    </ligand>
</feature>
<feature type="binding site" evidence="1">
    <location>
        <position position="78"/>
    </location>
    <ligand>
        <name>Fe cation</name>
        <dbReference type="ChEBI" id="CHEBI:24875"/>
    </ligand>
</feature>
<feature type="binding site" evidence="1">
    <location>
        <position position="82"/>
    </location>
    <ligand>
        <name>Fe cation</name>
        <dbReference type="ChEBI" id="CHEBI:24875"/>
    </ligand>
</feature>
<proteinExistence type="inferred from homology"/>
<protein>
    <recommendedName>
        <fullName evidence="1">DNA protection during starvation protein</fullName>
        <ecNumber evidence="1">1.16.-.-</ecNumber>
    </recommendedName>
</protein>
<sequence>MSTAKLVKTKASNLLYTRNDVSESDKKATVELLNRQVIQFIDLSLITKQAHWNMRGANFIAVHEMLDGFRTALTDHLDTMAERAVQLGGVALGTTQVINSKTPLKSYPLDIHNVQDHLKELADRYAVVANDVRKAIGEAKDEDTADIFTAASRDLDKFLWFIESNIE</sequence>
<dbReference type="EC" id="1.16.-.-" evidence="1"/>
<dbReference type="EMBL" id="CP000857">
    <property type="protein sequence ID" value="ACN44999.1"/>
    <property type="molecule type" value="Genomic_DNA"/>
</dbReference>
<dbReference type="RefSeq" id="WP_000100805.1">
    <property type="nucleotide sequence ID" value="NC_012125.1"/>
</dbReference>
<dbReference type="SMR" id="C0PX17"/>
<dbReference type="KEGG" id="sei:SPC_0827"/>
<dbReference type="HOGENOM" id="CLU_098183_1_2_6"/>
<dbReference type="Proteomes" id="UP000001599">
    <property type="component" value="Chromosome"/>
</dbReference>
<dbReference type="GO" id="GO:0005737">
    <property type="term" value="C:cytoplasm"/>
    <property type="evidence" value="ECO:0007669"/>
    <property type="project" value="UniProtKB-SubCell"/>
</dbReference>
<dbReference type="GO" id="GO:0003677">
    <property type="term" value="F:DNA binding"/>
    <property type="evidence" value="ECO:0007669"/>
    <property type="project" value="UniProtKB-UniRule"/>
</dbReference>
<dbReference type="GO" id="GO:0008199">
    <property type="term" value="F:ferric iron binding"/>
    <property type="evidence" value="ECO:0007669"/>
    <property type="project" value="UniProtKB-UniRule"/>
</dbReference>
<dbReference type="GO" id="GO:0016722">
    <property type="term" value="F:oxidoreductase activity, acting on metal ions"/>
    <property type="evidence" value="ECO:0007669"/>
    <property type="project" value="InterPro"/>
</dbReference>
<dbReference type="GO" id="GO:0030261">
    <property type="term" value="P:chromosome condensation"/>
    <property type="evidence" value="ECO:0007669"/>
    <property type="project" value="UniProtKB-KW"/>
</dbReference>
<dbReference type="GO" id="GO:0006879">
    <property type="term" value="P:intracellular iron ion homeostasis"/>
    <property type="evidence" value="ECO:0007669"/>
    <property type="project" value="UniProtKB-KW"/>
</dbReference>
<dbReference type="CDD" id="cd01043">
    <property type="entry name" value="DPS"/>
    <property type="match status" value="1"/>
</dbReference>
<dbReference type="FunFam" id="1.20.1260.10:FF:000003">
    <property type="entry name" value="DNA protection during starvation protein"/>
    <property type="match status" value="1"/>
</dbReference>
<dbReference type="Gene3D" id="1.20.1260.10">
    <property type="match status" value="1"/>
</dbReference>
<dbReference type="HAMAP" id="MF_01441">
    <property type="entry name" value="Dps"/>
    <property type="match status" value="1"/>
</dbReference>
<dbReference type="InterPro" id="IPR002177">
    <property type="entry name" value="DPS_DNA-bd"/>
</dbReference>
<dbReference type="InterPro" id="IPR023188">
    <property type="entry name" value="DPS_DNA-bd_CS"/>
</dbReference>
<dbReference type="InterPro" id="IPR023067">
    <property type="entry name" value="Dps_gammaproteobac"/>
</dbReference>
<dbReference type="InterPro" id="IPR012347">
    <property type="entry name" value="Ferritin-like"/>
</dbReference>
<dbReference type="InterPro" id="IPR009078">
    <property type="entry name" value="Ferritin-like_SF"/>
</dbReference>
<dbReference type="InterPro" id="IPR008331">
    <property type="entry name" value="Ferritin_DPS_dom"/>
</dbReference>
<dbReference type="NCBIfam" id="NF006975">
    <property type="entry name" value="PRK09448.1"/>
    <property type="match status" value="1"/>
</dbReference>
<dbReference type="PANTHER" id="PTHR42932:SF3">
    <property type="entry name" value="DNA PROTECTION DURING STARVATION PROTEIN"/>
    <property type="match status" value="1"/>
</dbReference>
<dbReference type="PANTHER" id="PTHR42932">
    <property type="entry name" value="GENERAL STRESS PROTEIN 20U"/>
    <property type="match status" value="1"/>
</dbReference>
<dbReference type="Pfam" id="PF00210">
    <property type="entry name" value="Ferritin"/>
    <property type="match status" value="1"/>
</dbReference>
<dbReference type="PIRSF" id="PIRSF005900">
    <property type="entry name" value="Dps"/>
    <property type="match status" value="1"/>
</dbReference>
<dbReference type="PRINTS" id="PR01346">
    <property type="entry name" value="HELNAPAPROT"/>
</dbReference>
<dbReference type="SUPFAM" id="SSF47240">
    <property type="entry name" value="Ferritin-like"/>
    <property type="match status" value="1"/>
</dbReference>
<dbReference type="PROSITE" id="PS00818">
    <property type="entry name" value="DPS_1"/>
    <property type="match status" value="1"/>
</dbReference>
<dbReference type="PROSITE" id="PS00819">
    <property type="entry name" value="DPS_2"/>
    <property type="match status" value="1"/>
</dbReference>
<reference key="1">
    <citation type="journal article" date="2009" name="PLoS ONE">
        <title>Salmonella paratyphi C: genetic divergence from Salmonella choleraesuis and pathogenic convergence with Salmonella typhi.</title>
        <authorList>
            <person name="Liu W.-Q."/>
            <person name="Feng Y."/>
            <person name="Wang Y."/>
            <person name="Zou Q.-H."/>
            <person name="Chen F."/>
            <person name="Guo J.-T."/>
            <person name="Peng Y.-H."/>
            <person name="Jin Y."/>
            <person name="Li Y.-G."/>
            <person name="Hu S.-N."/>
            <person name="Johnston R.N."/>
            <person name="Liu G.-R."/>
            <person name="Liu S.-L."/>
        </authorList>
    </citation>
    <scope>NUCLEOTIDE SEQUENCE [LARGE SCALE GENOMIC DNA]</scope>
    <source>
        <strain>RKS4594</strain>
    </source>
</reference>
<name>DPS_SALPC</name>
<gene>
    <name evidence="1" type="primary">dps</name>
    <name type="ordered locus">SPC_0827</name>
</gene>
<comment type="function">
    <text evidence="1">During stationary phase, binds the chromosome non-specifically, forming a highly ordered and stable dps-DNA co-crystal within which chromosomal DNA is condensed and protected from diverse damages. It protects DNA from oxidative damage by sequestering intracellular Fe(2+) ion and storing it in the form of Fe(3+) oxyhydroxide mineral, which can be released after reduction. One hydrogen peroxide oxidizes two Fe(2+) ions, which prevents hydroxyl radical production by the Fenton reaction.</text>
</comment>
<comment type="catalytic activity">
    <reaction evidence="1">
        <text>2 Fe(2+) + H2O2 + 2 H(+) = 2 Fe(3+) + 2 H2O</text>
        <dbReference type="Rhea" id="RHEA:48712"/>
        <dbReference type="ChEBI" id="CHEBI:15377"/>
        <dbReference type="ChEBI" id="CHEBI:15378"/>
        <dbReference type="ChEBI" id="CHEBI:16240"/>
        <dbReference type="ChEBI" id="CHEBI:29033"/>
        <dbReference type="ChEBI" id="CHEBI:29034"/>
    </reaction>
</comment>
<comment type="subunit">
    <text evidence="1">Homododecamer. The 12 subunits form a hollow sphere into which the mineral iron core of up to 500 Fe(3+) can be deposited.</text>
</comment>
<comment type="subcellular location">
    <subcellularLocation>
        <location evidence="1">Cytoplasm</location>
    </subcellularLocation>
</comment>
<comment type="similarity">
    <text evidence="1">Belongs to the Dps family.</text>
</comment>
<organism>
    <name type="scientific">Salmonella paratyphi C (strain RKS4594)</name>
    <dbReference type="NCBI Taxonomy" id="476213"/>
    <lineage>
        <taxon>Bacteria</taxon>
        <taxon>Pseudomonadati</taxon>
        <taxon>Pseudomonadota</taxon>
        <taxon>Gammaproteobacteria</taxon>
        <taxon>Enterobacterales</taxon>
        <taxon>Enterobacteriaceae</taxon>
        <taxon>Salmonella</taxon>
    </lineage>
</organism>
<keyword id="KW-0963">Cytoplasm</keyword>
<keyword id="KW-0226">DNA condensation</keyword>
<keyword id="KW-0238">DNA-binding</keyword>
<keyword id="KW-0408">Iron</keyword>
<keyword id="KW-0409">Iron storage</keyword>
<keyword id="KW-0479">Metal-binding</keyword>
<keyword id="KW-0560">Oxidoreductase</keyword>
<accession>C0PX17</accession>